<gene>
    <name evidence="1" type="primary">recF</name>
    <name type="ordered locus">CLK_3136</name>
</gene>
<organism>
    <name type="scientific">Clostridium botulinum (strain Loch Maree / Type A3)</name>
    <dbReference type="NCBI Taxonomy" id="498214"/>
    <lineage>
        <taxon>Bacteria</taxon>
        <taxon>Bacillati</taxon>
        <taxon>Bacillota</taxon>
        <taxon>Clostridia</taxon>
        <taxon>Eubacteriales</taxon>
        <taxon>Clostridiaceae</taxon>
        <taxon>Clostridium</taxon>
    </lineage>
</organism>
<reference key="1">
    <citation type="journal article" date="2007" name="PLoS ONE">
        <title>Analysis of the neurotoxin complex genes in Clostridium botulinum A1-A4 and B1 strains: BoNT/A3, /Ba4 and /B1 clusters are located within plasmids.</title>
        <authorList>
            <person name="Smith T.J."/>
            <person name="Hill K.K."/>
            <person name="Foley B.T."/>
            <person name="Detter J.C."/>
            <person name="Munk A.C."/>
            <person name="Bruce D.C."/>
            <person name="Doggett N.A."/>
            <person name="Smith L.A."/>
            <person name="Marks J.D."/>
            <person name="Xie G."/>
            <person name="Brettin T.S."/>
        </authorList>
    </citation>
    <scope>NUCLEOTIDE SEQUENCE [LARGE SCALE GENOMIC DNA]</scope>
    <source>
        <strain>Loch Maree / Type A3</strain>
    </source>
</reference>
<keyword id="KW-0067">ATP-binding</keyword>
<keyword id="KW-0963">Cytoplasm</keyword>
<keyword id="KW-0227">DNA damage</keyword>
<keyword id="KW-0234">DNA repair</keyword>
<keyword id="KW-0235">DNA replication</keyword>
<keyword id="KW-0238">DNA-binding</keyword>
<keyword id="KW-0547">Nucleotide-binding</keyword>
<keyword id="KW-0742">SOS response</keyword>
<name>RECF_CLOBM</name>
<dbReference type="EMBL" id="CP000962">
    <property type="protein sequence ID" value="ACA54651.1"/>
    <property type="molecule type" value="Genomic_DNA"/>
</dbReference>
<dbReference type="RefSeq" id="WP_012342728.1">
    <property type="nucleotide sequence ID" value="NC_010520.1"/>
</dbReference>
<dbReference type="SMR" id="B1L1K9"/>
<dbReference type="KEGG" id="cbl:CLK_3136"/>
<dbReference type="HOGENOM" id="CLU_040267_0_1_9"/>
<dbReference type="GO" id="GO:0005737">
    <property type="term" value="C:cytoplasm"/>
    <property type="evidence" value="ECO:0007669"/>
    <property type="project" value="UniProtKB-SubCell"/>
</dbReference>
<dbReference type="GO" id="GO:0005524">
    <property type="term" value="F:ATP binding"/>
    <property type="evidence" value="ECO:0007669"/>
    <property type="project" value="UniProtKB-UniRule"/>
</dbReference>
<dbReference type="GO" id="GO:0003697">
    <property type="term" value="F:single-stranded DNA binding"/>
    <property type="evidence" value="ECO:0007669"/>
    <property type="project" value="UniProtKB-UniRule"/>
</dbReference>
<dbReference type="GO" id="GO:0006260">
    <property type="term" value="P:DNA replication"/>
    <property type="evidence" value="ECO:0007669"/>
    <property type="project" value="UniProtKB-UniRule"/>
</dbReference>
<dbReference type="GO" id="GO:0000731">
    <property type="term" value="P:DNA synthesis involved in DNA repair"/>
    <property type="evidence" value="ECO:0007669"/>
    <property type="project" value="TreeGrafter"/>
</dbReference>
<dbReference type="GO" id="GO:0006302">
    <property type="term" value="P:double-strand break repair"/>
    <property type="evidence" value="ECO:0007669"/>
    <property type="project" value="TreeGrafter"/>
</dbReference>
<dbReference type="GO" id="GO:0009432">
    <property type="term" value="P:SOS response"/>
    <property type="evidence" value="ECO:0007669"/>
    <property type="project" value="UniProtKB-UniRule"/>
</dbReference>
<dbReference type="CDD" id="cd03242">
    <property type="entry name" value="ABC_RecF"/>
    <property type="match status" value="1"/>
</dbReference>
<dbReference type="Gene3D" id="3.40.50.300">
    <property type="entry name" value="P-loop containing nucleotide triphosphate hydrolases"/>
    <property type="match status" value="1"/>
</dbReference>
<dbReference type="Gene3D" id="1.20.1050.90">
    <property type="entry name" value="RecF/RecN/SMC, N-terminal domain"/>
    <property type="match status" value="1"/>
</dbReference>
<dbReference type="HAMAP" id="MF_00365">
    <property type="entry name" value="RecF"/>
    <property type="match status" value="1"/>
</dbReference>
<dbReference type="InterPro" id="IPR001238">
    <property type="entry name" value="DNA-binding_RecF"/>
</dbReference>
<dbReference type="InterPro" id="IPR018078">
    <property type="entry name" value="DNA-binding_RecF_CS"/>
</dbReference>
<dbReference type="InterPro" id="IPR027417">
    <property type="entry name" value="P-loop_NTPase"/>
</dbReference>
<dbReference type="InterPro" id="IPR003395">
    <property type="entry name" value="RecF/RecN/SMC_N"/>
</dbReference>
<dbReference type="InterPro" id="IPR042174">
    <property type="entry name" value="RecF_2"/>
</dbReference>
<dbReference type="NCBIfam" id="TIGR00611">
    <property type="entry name" value="recf"/>
    <property type="match status" value="1"/>
</dbReference>
<dbReference type="PANTHER" id="PTHR32182">
    <property type="entry name" value="DNA REPLICATION AND REPAIR PROTEIN RECF"/>
    <property type="match status" value="1"/>
</dbReference>
<dbReference type="PANTHER" id="PTHR32182:SF0">
    <property type="entry name" value="DNA REPLICATION AND REPAIR PROTEIN RECF"/>
    <property type="match status" value="1"/>
</dbReference>
<dbReference type="Pfam" id="PF02463">
    <property type="entry name" value="SMC_N"/>
    <property type="match status" value="1"/>
</dbReference>
<dbReference type="SUPFAM" id="SSF52540">
    <property type="entry name" value="P-loop containing nucleoside triphosphate hydrolases"/>
    <property type="match status" value="1"/>
</dbReference>
<dbReference type="PROSITE" id="PS00617">
    <property type="entry name" value="RECF_1"/>
    <property type="match status" value="1"/>
</dbReference>
<sequence length="364" mass="42638">MYIKSVHLINFRNYDDMYLELSPNTNIFVGNNAQGKTNILESIYYSSIGKSHRTNKDKDLIKWDKNNTYLRTYVSRERLDKTIDINIFKNGKKAITVNKIKIKKISELMGNLNVVMFSPEDLRIIKDSPGNRRKFLDIELCKINNVYYHDLVQYNKILSERNTALKNWNNRINDIIDVYDEQLSKYGAFIIKERNKYLDKLNIIGKNIHKKITNDLEDINFRYLTNIKDFDNAEKELLMLFKKNRKKDLERNSTSIGPHRDDFEVSINNIDTRIFGSQGQQRTAVLTLKFASLEIIKNIIGEYPALLLDDVLSELDSNRQKFVLNSIDKIQTIITCTGIEEIDKYLDKKQSQLYLVNNGKIKKV</sequence>
<comment type="function">
    <text evidence="1">The RecF protein is involved in DNA metabolism; it is required for DNA replication and normal SOS inducibility. RecF binds preferentially to single-stranded, linear DNA. It also seems to bind ATP.</text>
</comment>
<comment type="subcellular location">
    <subcellularLocation>
        <location evidence="1">Cytoplasm</location>
    </subcellularLocation>
</comment>
<comment type="similarity">
    <text evidence="1">Belongs to the RecF family.</text>
</comment>
<feature type="chain" id="PRO_1000121100" description="DNA replication and repair protein RecF">
    <location>
        <begin position="1"/>
        <end position="364"/>
    </location>
</feature>
<feature type="binding site" evidence="1">
    <location>
        <begin position="30"/>
        <end position="37"/>
    </location>
    <ligand>
        <name>ATP</name>
        <dbReference type="ChEBI" id="CHEBI:30616"/>
    </ligand>
</feature>
<protein>
    <recommendedName>
        <fullName evidence="1">DNA replication and repair protein RecF</fullName>
    </recommendedName>
</protein>
<proteinExistence type="inferred from homology"/>
<accession>B1L1K9</accession>
<evidence type="ECO:0000255" key="1">
    <source>
        <dbReference type="HAMAP-Rule" id="MF_00365"/>
    </source>
</evidence>